<protein>
    <recommendedName>
        <fullName evidence="16">Guided entry of tail-anchored proteins factor CAMLG</fullName>
    </recommendedName>
    <alternativeName>
        <fullName evidence="18">Calcium signal-modulating cyclophilin ligand</fullName>
    </alternativeName>
</protein>
<name>CAMLG_HUMAN</name>
<keyword id="KW-0002">3D-structure</keyword>
<keyword id="KW-0900">Congenital disorder of glycosylation</keyword>
<keyword id="KW-1015">Disulfide bond</keyword>
<keyword id="KW-0256">Endoplasmic reticulum</keyword>
<keyword id="KW-0931">ER-Golgi transport</keyword>
<keyword id="KW-0945">Host-virus interaction</keyword>
<keyword id="KW-0472">Membrane</keyword>
<keyword id="KW-0597">Phosphoprotein</keyword>
<keyword id="KW-1267">Proteomics identification</keyword>
<keyword id="KW-1185">Reference proteome</keyword>
<keyword id="KW-0812">Transmembrane</keyword>
<keyword id="KW-1133">Transmembrane helix</keyword>
<keyword id="KW-0813">Transport</keyword>
<comment type="function">
    <text evidence="1 6 7 8 10 13">Required for the post-translational delivery of tail-anchored (TA) proteins to the endoplasmic reticulum (PubMed:23041287, PubMed:24392163, PubMed:27226539). Together with GET1/WRB, acts as a membrane receptor for soluble GET3/TRC40, which recognizes and selectively binds the transmembrane domain of TA proteins in the cytosol (PubMed:23041287, PubMed:24392163, PubMed:27226539). Required for the stability of GET1 (PubMed:32187542). Stimulates calcium signaling in T cells through its involvement in elevation of intracellular calcium (PubMed:7522304). Essential for the survival of peripheral follicular B cells (By similarity).</text>
</comment>
<comment type="subunit">
    <text evidence="2 6 7 9 10 11 14">Component of the Golgi to ER traffic (GET) complex, which is composed of GET1/WRB, CAMLG/GET2 and GET3/TRC40 (PubMed:23041287, PubMed:24392163, PubMed:32910895). Within the complex, GET1 and CAMLG form a heterotetramer which is stabilized by phosphatidylinositol binding and which binds to the GET3 homodimer (PubMed:32910895). Interacts (via C-terminus) with GET1 (PubMed:24392163, PubMed:31417168, PubMed:32187542). Interacts (via N-terminus) with GET3 (By similarity). GET3 shows a higher affinity for CAMLG than for GET1 (PubMed:24392163). Interacts (via N-terminus) with TNFRSF13B/TACI (via C-terminus) (PubMed:9311921).</text>
</comment>
<comment type="subunit">
    <text evidence="5">(Microbial infection) Interacts with human herpes virus 8/HHV-8 protein K7; this interaction modulates intracellular calcium concentration.</text>
</comment>
<comment type="interaction">
    <interactant intactId="EBI-1748958">
        <id>P49069</id>
    </interactant>
    <interactant intactId="EBI-10827839">
        <id>Q15848</id>
        <label>ADIPOQ</label>
    </interactant>
    <organismsDiffer>false</organismsDiffer>
    <experiments>3</experiments>
</comment>
<comment type="interaction">
    <interactant intactId="EBI-1748958">
        <id>P49069</id>
    </interactant>
    <interactant intactId="EBI-712648">
        <id>O95994</id>
        <label>AGR2</label>
    </interactant>
    <organismsDiffer>false</organismsDiffer>
    <experiments>3</experiments>
</comment>
<comment type="interaction">
    <interactant intactId="EBI-1748958">
        <id>P49069</id>
    </interactant>
    <interactant intactId="EBI-297353">
        <id>P00533</id>
        <label>EGFR</label>
    </interactant>
    <organismsDiffer>false</organismsDiffer>
    <experiments>3</experiments>
</comment>
<comment type="interaction">
    <interactant intactId="EBI-1748958">
        <id>P49069</id>
    </interactant>
    <interactant intactId="EBI-2834493">
        <id>Q9HBU6</id>
        <label>ETNK1</label>
    </interactant>
    <organismsDiffer>false</organismsDiffer>
    <experiments>3</experiments>
</comment>
<comment type="interaction">
    <interactant intactId="EBI-1748958">
        <id>P49069</id>
    </interactant>
    <interactant intactId="EBI-742600">
        <id>Q9Y624</id>
        <label>F11R</label>
    </interactant>
    <organismsDiffer>false</organismsDiffer>
    <experiments>3</experiments>
</comment>
<comment type="interaction">
    <interactant intactId="EBI-1748958">
        <id>P49069</id>
    </interactant>
    <interactant intactId="EBI-18908258">
        <id>O00258</id>
        <label>GET1</label>
    </interactant>
    <organismsDiffer>false</organismsDiffer>
    <experiments>3</experiments>
</comment>
<comment type="interaction">
    <interactant intactId="EBI-1748958">
        <id>P49069</id>
    </interactant>
    <interactant intactId="EBI-2515857">
        <id>O43681</id>
        <label>GET3</label>
    </interactant>
    <organismsDiffer>false</organismsDiffer>
    <experiments>7</experiments>
</comment>
<comment type="interaction">
    <interactant intactId="EBI-1748958">
        <id>P49069</id>
    </interactant>
    <interactant intactId="EBI-12885352">
        <id>Q96GW1</id>
        <label>HSP90B1</label>
    </interactant>
    <organismsDiffer>false</organismsDiffer>
    <experiments>3</experiments>
</comment>
<comment type="interaction">
    <interactant intactId="EBI-1748958">
        <id>P49069</id>
    </interactant>
    <interactant intactId="EBI-1748945">
        <id>P46695</id>
        <label>IER3</label>
    </interactant>
    <organismsDiffer>false</organismsDiffer>
    <experiments>2</experiments>
</comment>
<comment type="interaction">
    <interactant intactId="EBI-1748958">
        <id>P49069</id>
    </interactant>
    <interactant intactId="EBI-10210559">
        <id>P16389</id>
        <label>KCNA2</label>
    </interactant>
    <organismsDiffer>false</organismsDiffer>
    <experiments>4</experiments>
</comment>
<comment type="interaction">
    <interactant intactId="EBI-1748958">
        <id>P49069</id>
    </interactant>
    <interactant intactId="EBI-11987131">
        <id>P16389-2</id>
        <label>KCNA2</label>
    </interactant>
    <organismsDiffer>false</organismsDiffer>
    <experiments>3</experiments>
</comment>
<comment type="interaction">
    <interactant intactId="EBI-1748958">
        <id>P49069</id>
    </interactant>
    <interactant intactId="EBI-11750916">
        <id>Q8WWG9</id>
        <label>KCNE4</label>
    </interactant>
    <organismsDiffer>false</organismsDiffer>
    <experiments>3</experiments>
</comment>
<comment type="interaction">
    <interactant intactId="EBI-1748958">
        <id>P49069</id>
    </interactant>
    <interactant intactId="EBI-8070286">
        <id>O43561-2</id>
        <label>LAT</label>
    </interactant>
    <organismsDiffer>false</organismsDiffer>
    <experiments>3</experiments>
</comment>
<comment type="interaction">
    <interactant intactId="EBI-1748958">
        <id>P49069</id>
    </interactant>
    <interactant intactId="EBI-11911016">
        <id>P80188</id>
        <label>LCN2</label>
    </interactant>
    <organismsDiffer>false</organismsDiffer>
    <experiments>3</experiments>
</comment>
<comment type="interaction">
    <interactant intactId="EBI-1748958">
        <id>P49069</id>
    </interactant>
    <interactant intactId="EBI-2683029">
        <id>Q9NX40</id>
        <label>OCIAD1</label>
    </interactant>
    <organismsDiffer>false</organismsDiffer>
    <experiments>3</experiments>
</comment>
<comment type="interaction">
    <interactant intactId="EBI-1748958">
        <id>P49069</id>
    </interactant>
    <interactant intactId="EBI-740845">
        <id>Q96AQ6</id>
        <label>PBXIP1</label>
    </interactant>
    <organismsDiffer>false</organismsDiffer>
    <experiments>3</experiments>
</comment>
<comment type="interaction">
    <interactant intactId="EBI-1748958">
        <id>P49069</id>
    </interactant>
    <interactant intactId="EBI-1045534">
        <id>O00264</id>
        <label>PGRMC1</label>
    </interactant>
    <organismsDiffer>false</organismsDiffer>
    <experiments>3</experiments>
</comment>
<comment type="interaction">
    <interactant intactId="EBI-1748958">
        <id>P49069</id>
    </interactant>
    <interactant intactId="EBI-11693144">
        <id>P08F94</id>
        <label>PKHD1</label>
    </interactant>
    <organismsDiffer>false</organismsDiffer>
    <experiments>3</experiments>
</comment>
<comment type="interaction">
    <interactant intactId="EBI-1748958">
        <id>P49069</id>
    </interactant>
    <interactant intactId="EBI-355963">
        <id>P04843</id>
        <label>RPN1</label>
    </interactant>
    <organismsDiffer>false</organismsDiffer>
    <experiments>3</experiments>
</comment>
<comment type="interaction">
    <interactant intactId="EBI-1748958">
        <id>P49069</id>
    </interactant>
    <interactant intactId="EBI-2564581">
        <id>O95881</id>
        <label>TXNDC12</label>
    </interactant>
    <organismsDiffer>false</organismsDiffer>
    <experiments>5</experiments>
</comment>
<comment type="interaction">
    <interactant intactId="EBI-1748958">
        <id>P49069</id>
    </interactant>
    <interactant intactId="EBI-11957238">
        <id>Q2TAL6</id>
        <label>VWC2</label>
    </interactant>
    <organismsDiffer>false</organismsDiffer>
    <experiments>3</experiments>
</comment>
<comment type="interaction">
    <interactant intactId="EBI-1748958">
        <id>P49069</id>
    </interactant>
    <interactant intactId="EBI-25489089">
        <id>Q7T6S2</id>
        <label>NS7b</label>
    </interactant>
    <organismsDiffer>true</organismsDiffer>
    <experiments>2</experiments>
</comment>
<comment type="interaction">
    <interactant intactId="EBI-1748958">
        <id>P49069</id>
    </interactant>
    <interactant intactId="EBI-11693075">
        <id>E9PZ36</id>
        <label>Pkhd1</label>
    </interactant>
    <organismsDiffer>true</organismsDiffer>
    <experiments>4</experiments>
</comment>
<comment type="subcellular location">
    <subcellularLocation>
        <location evidence="6 9">Endoplasmic reticulum membrane</location>
        <topology evidence="3">Multi-pass membrane protein</topology>
    </subcellularLocation>
</comment>
<comment type="tissue specificity">
    <text>Ubiquitous. Highest levels in brain, testis and ovary.</text>
</comment>
<comment type="disease" evidence="12">
    <disease id="DI-06594">
        <name>Congenital disorder of glycosylation 2Z</name>
        <acronym>CDG2Z</acronym>
        <description>A form of congenital disorder of glycosylation, a genetically heterogeneous group of multisystem disorders caused by a defect in glycoprotein biosynthesis and characterized by under-glycosylated serum glycoproteins. Congenital disorders of glycosylation result in a wide variety of clinical features, such as defects in the nervous system development, psychomotor retardation, dysmorphic features, hypotonia, coagulation disorders, and immunodeficiency. The broad spectrum of features reflects the critical role of N-glycoproteins during embryonic development, differentiation, and maintenance of cell functions. CDG2Z is an autosomal recessive form characterized by a predominantly neurological phenotype with psychomotor disability, hypotonia, epilepsy and structural brain abnormalities. Biochemically, CDG2Z is characterized by combined O- and N-linked glycosylation defects.</description>
        <dbReference type="MIM" id="620201"/>
    </disease>
    <text>The disease may be caused by variants affecting the gene represented in this entry.</text>
</comment>
<reference key="1">
    <citation type="journal article" date="1994" name="Nature">
        <title>Calcium signalling in T cells stimulated by a cyclophilin B-binding protein.</title>
        <authorList>
            <person name="Bram R.J."/>
            <person name="Crabtree G.R."/>
        </authorList>
    </citation>
    <scope>NUCLEOTIDE SEQUENCE [MRNA]</scope>
    <scope>FUNCTION</scope>
</reference>
<reference key="2">
    <citation type="journal article" date="2004" name="Nat. Genet.">
        <title>Complete sequencing and characterization of 21,243 full-length human cDNAs.</title>
        <authorList>
            <person name="Ota T."/>
            <person name="Suzuki Y."/>
            <person name="Nishikawa T."/>
            <person name="Otsuki T."/>
            <person name="Sugiyama T."/>
            <person name="Irie R."/>
            <person name="Wakamatsu A."/>
            <person name="Hayashi K."/>
            <person name="Sato H."/>
            <person name="Nagai K."/>
            <person name="Kimura K."/>
            <person name="Makita H."/>
            <person name="Sekine M."/>
            <person name="Obayashi M."/>
            <person name="Nishi T."/>
            <person name="Shibahara T."/>
            <person name="Tanaka T."/>
            <person name="Ishii S."/>
            <person name="Yamamoto J."/>
            <person name="Saito K."/>
            <person name="Kawai Y."/>
            <person name="Isono Y."/>
            <person name="Nakamura Y."/>
            <person name="Nagahari K."/>
            <person name="Murakami K."/>
            <person name="Yasuda T."/>
            <person name="Iwayanagi T."/>
            <person name="Wagatsuma M."/>
            <person name="Shiratori A."/>
            <person name="Sudo H."/>
            <person name="Hosoiri T."/>
            <person name="Kaku Y."/>
            <person name="Kodaira H."/>
            <person name="Kondo H."/>
            <person name="Sugawara M."/>
            <person name="Takahashi M."/>
            <person name="Kanda K."/>
            <person name="Yokoi T."/>
            <person name="Furuya T."/>
            <person name="Kikkawa E."/>
            <person name="Omura Y."/>
            <person name="Abe K."/>
            <person name="Kamihara K."/>
            <person name="Katsuta N."/>
            <person name="Sato K."/>
            <person name="Tanikawa M."/>
            <person name="Yamazaki M."/>
            <person name="Ninomiya K."/>
            <person name="Ishibashi T."/>
            <person name="Yamashita H."/>
            <person name="Murakawa K."/>
            <person name="Fujimori K."/>
            <person name="Tanai H."/>
            <person name="Kimata M."/>
            <person name="Watanabe M."/>
            <person name="Hiraoka S."/>
            <person name="Chiba Y."/>
            <person name="Ishida S."/>
            <person name="Ono Y."/>
            <person name="Takiguchi S."/>
            <person name="Watanabe S."/>
            <person name="Yosida M."/>
            <person name="Hotuta T."/>
            <person name="Kusano J."/>
            <person name="Kanehori K."/>
            <person name="Takahashi-Fujii A."/>
            <person name="Hara H."/>
            <person name="Tanase T.-O."/>
            <person name="Nomura Y."/>
            <person name="Togiya S."/>
            <person name="Komai F."/>
            <person name="Hara R."/>
            <person name="Takeuchi K."/>
            <person name="Arita M."/>
            <person name="Imose N."/>
            <person name="Musashino K."/>
            <person name="Yuuki H."/>
            <person name="Oshima A."/>
            <person name="Sasaki N."/>
            <person name="Aotsuka S."/>
            <person name="Yoshikawa Y."/>
            <person name="Matsunawa H."/>
            <person name="Ichihara T."/>
            <person name="Shiohata N."/>
            <person name="Sano S."/>
            <person name="Moriya S."/>
            <person name="Momiyama H."/>
            <person name="Satoh N."/>
            <person name="Takami S."/>
            <person name="Terashima Y."/>
            <person name="Suzuki O."/>
            <person name="Nakagawa S."/>
            <person name="Senoh A."/>
            <person name="Mizoguchi H."/>
            <person name="Goto Y."/>
            <person name="Shimizu F."/>
            <person name="Wakebe H."/>
            <person name="Hishigaki H."/>
            <person name="Watanabe T."/>
            <person name="Sugiyama A."/>
            <person name="Takemoto M."/>
            <person name="Kawakami B."/>
            <person name="Yamazaki M."/>
            <person name="Watanabe K."/>
            <person name="Kumagai A."/>
            <person name="Itakura S."/>
            <person name="Fukuzumi Y."/>
            <person name="Fujimori Y."/>
            <person name="Komiyama M."/>
            <person name="Tashiro H."/>
            <person name="Tanigami A."/>
            <person name="Fujiwara T."/>
            <person name="Ono T."/>
            <person name="Yamada K."/>
            <person name="Fujii Y."/>
            <person name="Ozaki K."/>
            <person name="Hirao M."/>
            <person name="Ohmori Y."/>
            <person name="Kawabata A."/>
            <person name="Hikiji T."/>
            <person name="Kobatake N."/>
            <person name="Inagaki H."/>
            <person name="Ikema Y."/>
            <person name="Okamoto S."/>
            <person name="Okitani R."/>
            <person name="Kawakami T."/>
            <person name="Noguchi S."/>
            <person name="Itoh T."/>
            <person name="Shigeta K."/>
            <person name="Senba T."/>
            <person name="Matsumura K."/>
            <person name="Nakajima Y."/>
            <person name="Mizuno T."/>
            <person name="Morinaga M."/>
            <person name="Sasaki M."/>
            <person name="Togashi T."/>
            <person name="Oyama M."/>
            <person name="Hata H."/>
            <person name="Watanabe M."/>
            <person name="Komatsu T."/>
            <person name="Mizushima-Sugano J."/>
            <person name="Satoh T."/>
            <person name="Shirai Y."/>
            <person name="Takahashi Y."/>
            <person name="Nakagawa K."/>
            <person name="Okumura K."/>
            <person name="Nagase T."/>
            <person name="Nomura N."/>
            <person name="Kikuchi H."/>
            <person name="Masuho Y."/>
            <person name="Yamashita R."/>
            <person name="Nakai K."/>
            <person name="Yada T."/>
            <person name="Nakamura Y."/>
            <person name="Ohara O."/>
            <person name="Isogai T."/>
            <person name="Sugano S."/>
        </authorList>
    </citation>
    <scope>NUCLEOTIDE SEQUENCE [LARGE SCALE MRNA]</scope>
    <source>
        <tissue>Brain</tissue>
    </source>
</reference>
<reference key="3">
    <citation type="submission" date="2005-09" db="EMBL/GenBank/DDBJ databases">
        <authorList>
            <person name="Mural R.J."/>
            <person name="Istrail S."/>
            <person name="Sutton G."/>
            <person name="Florea L."/>
            <person name="Halpern A.L."/>
            <person name="Mobarry C.M."/>
            <person name="Lippert R."/>
            <person name="Walenz B."/>
            <person name="Shatkay H."/>
            <person name="Dew I."/>
            <person name="Miller J.R."/>
            <person name="Flanigan M.J."/>
            <person name="Edwards N.J."/>
            <person name="Bolanos R."/>
            <person name="Fasulo D."/>
            <person name="Halldorsson B.V."/>
            <person name="Hannenhalli S."/>
            <person name="Turner R."/>
            <person name="Yooseph S."/>
            <person name="Lu F."/>
            <person name="Nusskern D.R."/>
            <person name="Shue B.C."/>
            <person name="Zheng X.H."/>
            <person name="Zhong F."/>
            <person name="Delcher A.L."/>
            <person name="Huson D.H."/>
            <person name="Kravitz S.A."/>
            <person name="Mouchard L."/>
            <person name="Reinert K."/>
            <person name="Remington K.A."/>
            <person name="Clark A.G."/>
            <person name="Waterman M.S."/>
            <person name="Eichler E.E."/>
            <person name="Adams M.D."/>
            <person name="Hunkapiller M.W."/>
            <person name="Myers E.W."/>
            <person name="Venter J.C."/>
        </authorList>
    </citation>
    <scope>NUCLEOTIDE SEQUENCE [LARGE SCALE GENOMIC DNA]</scope>
</reference>
<reference key="4">
    <citation type="journal article" date="2004" name="Genome Res.">
        <title>The status, quality, and expansion of the NIH full-length cDNA project: the Mammalian Gene Collection (MGC).</title>
        <authorList>
            <consortium name="The MGC Project Team"/>
        </authorList>
    </citation>
    <scope>NUCLEOTIDE SEQUENCE [LARGE SCALE MRNA]</scope>
    <source>
        <tissue>Brain</tissue>
    </source>
</reference>
<reference key="5">
    <citation type="submission" date="1998-05" db="EMBL/GenBank/DDBJ databases">
        <title>An immature transcript of the CAMLG gene.</title>
        <authorList>
            <person name="Morales V.M."/>
            <person name="Blumberg R.S."/>
        </authorList>
    </citation>
    <scope>NUCLEOTIDE SEQUENCE [MRNA] OF 49-296</scope>
    <source>
        <tissue>Colon adenocarcinoma</tissue>
    </source>
</reference>
<reference key="6">
    <citation type="journal article" date="1997" name="Science">
        <title>NF-AT activation induced by a CAML-interacting member of the tumor necrosis factor receptor superfamily.</title>
        <authorList>
            <person name="von Buelow G.-U."/>
            <person name="Bram R.J."/>
        </authorList>
    </citation>
    <scope>INTERACTION WITH TNFRSF13B</scope>
</reference>
<reference key="7">
    <citation type="journal article" date="2002" name="J. Virol.">
        <title>Kaposi's sarcoma-associated herpesvirus mitochondrial K7 protein targets a cellular calcium-modulating cyclophilin ligand to modulate intracellular calcium concentration and inhibit apoptosis.</title>
        <authorList>
            <person name="Feng P."/>
            <person name="Park J."/>
            <person name="Lee B.S."/>
            <person name="Lee S.H."/>
            <person name="Bram R.J."/>
            <person name="Jung J.U."/>
        </authorList>
    </citation>
    <scope>INTERACTION WITH HHV-8 PROTEIN K7 (MICROBIAL INFECTION)</scope>
</reference>
<reference key="8">
    <citation type="journal article" date="2011" name="BMC Syst. Biol.">
        <title>Initial characterization of the human central proteome.</title>
        <authorList>
            <person name="Burkard T.R."/>
            <person name="Planyavsky M."/>
            <person name="Kaupe I."/>
            <person name="Breitwieser F.P."/>
            <person name="Buerckstuemmer T."/>
            <person name="Bennett K.L."/>
            <person name="Superti-Furga G."/>
            <person name="Colinge J."/>
        </authorList>
    </citation>
    <scope>IDENTIFICATION BY MASS SPECTROMETRY [LARGE SCALE ANALYSIS]</scope>
</reference>
<reference key="9">
    <citation type="journal article" date="2012" name="Mol. Cell">
        <title>Molecular machinery for insertion of tail-anchored membrane proteins into the endoplasmic reticulum membrane in mammalian cells.</title>
        <authorList>
            <person name="Yamamoto Y."/>
            <person name="Sakisaka T."/>
        </authorList>
    </citation>
    <scope>FUNCTION</scope>
    <scope>IDENTIFICATION IN GET COMPLEX</scope>
    <scope>SUBCELLULAR LOCATION</scope>
    <scope>IDENTIFICATION BY MASS SPECTROMETRY</scope>
    <scope>MUTAGENESIS OF 32-ARG--LYS-35</scope>
</reference>
<reference key="10">
    <citation type="journal article" date="2013" name="J. Proteome Res.">
        <title>Toward a comprehensive characterization of a human cancer cell phosphoproteome.</title>
        <authorList>
            <person name="Zhou H."/>
            <person name="Di Palma S."/>
            <person name="Preisinger C."/>
            <person name="Peng M."/>
            <person name="Polat A.N."/>
            <person name="Heck A.J."/>
            <person name="Mohammed S."/>
        </authorList>
    </citation>
    <scope>PHOSPHORYLATION [LARGE SCALE ANALYSIS] AT SER-55</scope>
    <scope>IDENTIFICATION BY MASS SPECTROMETRY [LARGE SCALE ANALYSIS]</scope>
    <source>
        <tissue>Cervix carcinoma</tissue>
        <tissue>Erythroleukemia</tissue>
    </source>
</reference>
<reference key="11">
    <citation type="journal article" date="2014" name="J. Proteomics">
        <title>An enzyme assisted RP-RPLC approach for in-depth analysis of human liver phosphoproteome.</title>
        <authorList>
            <person name="Bian Y."/>
            <person name="Song C."/>
            <person name="Cheng K."/>
            <person name="Dong M."/>
            <person name="Wang F."/>
            <person name="Huang J."/>
            <person name="Sun D."/>
            <person name="Wang L."/>
            <person name="Ye M."/>
            <person name="Zou H."/>
        </authorList>
    </citation>
    <scope>IDENTIFICATION BY MASS SPECTROMETRY [LARGE SCALE ANALYSIS]</scope>
    <source>
        <tissue>Liver</tissue>
    </source>
</reference>
<reference key="12">
    <citation type="journal article" date="2014" name="PLoS ONE">
        <title>WRB and CAML are necessary and sufficient to mediate tail-anchored protein targeting to the ER membrane.</title>
        <authorList>
            <person name="Vilardi F."/>
            <person name="Stephan M."/>
            <person name="Clancy A."/>
            <person name="Janshoff A."/>
            <person name="Schwappach B."/>
        </authorList>
    </citation>
    <scope>FUNCTION</scope>
    <scope>INTERACTION WITH GET1 AND GET3</scope>
</reference>
<reference key="13">
    <citation type="journal article" date="2016" name="J. Biol. Chem.">
        <title>Tail-anchored protein insertion in mammals: function and reciprocal interactions of the two subunits of the TRC40 receptor.</title>
        <authorList>
            <person name="Colombo S.F."/>
            <person name="Cardani S."/>
            <person name="Maroli A."/>
            <person name="Vitiello A."/>
            <person name="Soffientini P."/>
            <person name="Crespi A."/>
            <person name="Bram R.F."/>
            <person name="Benfante R."/>
            <person name="Borgese N."/>
        </authorList>
    </citation>
    <scope>FUNCTION</scope>
</reference>
<reference key="14">
    <citation type="journal article" date="2019" name="Sci. Rep.">
        <title>The WRB Subunit of the Get3 Receptor is Required for the Correct Integration of its Partner CAML into the ER.</title>
        <authorList>
            <person name="Carvalho H.J.F."/>
            <person name="Del Bondio A."/>
            <person name="Maltecca F."/>
            <person name="Colombo S.F."/>
            <person name="Borgese N."/>
        </authorList>
    </citation>
    <scope>INTERACTION WITH GET1</scope>
    <scope>SUBCELLULAR LOCATION</scope>
    <scope>TOPOLOGY</scope>
</reference>
<reference key="15">
    <citation type="journal article" date="2020" name="Cell Rep.">
        <title>Differential Modes of Orphan Subunit Recognition for the WRB/CAML Complex.</title>
        <authorList>
            <person name="Inglis A.J."/>
            <person name="Page K.R."/>
            <person name="Guna A."/>
            <person name="Voorhees R.M."/>
        </authorList>
    </citation>
    <scope>FUNCTION</scope>
    <scope>INTERACTION WITH GET1</scope>
</reference>
<reference key="16">
    <citation type="journal article" date="2022" name="Hum. Mol. Genet.">
        <title>CAMLG-CDG: a novel congenital disorder of glycosylation linked to defective membrane trafficking.</title>
        <authorList>
            <person name="Wilson M.P."/>
            <person name="Durin Z."/>
            <person name="Unal O."/>
            <person name="Ng B.G."/>
            <person name="Marrecau T."/>
            <person name="Keldermans L."/>
            <person name="Souche E."/>
            <person name="Rymen D."/>
            <person name="Guenduez M."/>
            <person name="Koese G."/>
            <person name="Sturiale L."/>
            <person name="Garozzo D."/>
            <person name="Freeze H.H."/>
            <person name="Jaeken J."/>
            <person name="Foulquier F."/>
            <person name="Matthijs G."/>
        </authorList>
    </citation>
    <scope>INVOLVEMENT IN CDG2Z</scope>
</reference>
<reference key="17">
    <citation type="journal article" date="2020" name="Mol. Cell">
        <title>Structural Basis of Tail-Anchored Membrane Protein Biogenesis by the GET Insertase Complex.</title>
        <authorList>
            <person name="McDowell M.A."/>
            <person name="Heimes M."/>
            <person name="Fiorentino F."/>
            <person name="Mehmood S."/>
            <person name="Farkas A."/>
            <person name="Coy-Vergara J."/>
            <person name="Wu D."/>
            <person name="Bolla J.R."/>
            <person name="Schmid V."/>
            <person name="Heinze R."/>
            <person name="Wild K."/>
            <person name="Flemming D."/>
            <person name="Pfeffer S."/>
            <person name="Schwappach B."/>
            <person name="Robinson C.V."/>
            <person name="Sinning I."/>
        </authorList>
    </citation>
    <scope>STRUCTURE BY ELECTRON MICROSCOPY (4.20 ANGSTROMS) OF THE GET COMPLEX</scope>
    <scope>DISULFIDE BOND</scope>
</reference>
<proteinExistence type="evidence at protein level"/>
<accession>P49069</accession>
<accession>A1L3Y3</accession>
<feature type="chain" id="PRO_0000089291" description="Guided entry of tail-anchored proteins factor CAMLG">
    <location>
        <begin position="1"/>
        <end position="296"/>
    </location>
</feature>
<feature type="topological domain" description="Cytoplasmic" evidence="17">
    <location>
        <begin position="1"/>
        <end position="189"/>
    </location>
</feature>
<feature type="transmembrane region" description="Helical" evidence="3">
    <location>
        <begin position="190"/>
        <end position="207"/>
    </location>
</feature>
<feature type="topological domain" description="Lumenal" evidence="17">
    <location>
        <begin position="208"/>
        <end position="212"/>
    </location>
</feature>
<feature type="transmembrane region" description="Helical" evidence="3">
    <location>
        <begin position="213"/>
        <end position="231"/>
    </location>
</feature>
<feature type="topological domain" description="Cytoplasmic" evidence="17">
    <location>
        <begin position="232"/>
        <end position="269"/>
    </location>
</feature>
<feature type="transmembrane region" description="Helical" evidence="3">
    <location>
        <begin position="270"/>
        <end position="288"/>
    </location>
</feature>
<feature type="topological domain" description="Lumenal" evidence="17">
    <location>
        <begin position="289"/>
        <end position="296"/>
    </location>
</feature>
<feature type="region of interest" description="Disordered" evidence="4">
    <location>
        <begin position="1"/>
        <end position="79"/>
    </location>
</feature>
<feature type="compositionally biased region" description="Basic and acidic residues" evidence="4">
    <location>
        <begin position="61"/>
        <end position="72"/>
    </location>
</feature>
<feature type="modified residue" description="Phosphoserine" evidence="20">
    <location>
        <position position="55"/>
    </location>
</feature>
<feature type="disulfide bond" evidence="11 19">
    <location>
        <begin position="208"/>
        <end position="284"/>
    </location>
</feature>
<feature type="sequence variant" id="VAR_024297" description="In dbSNP:rs12657663.">
    <original>V</original>
    <variation>I</variation>
    <location>
        <position position="78"/>
    </location>
</feature>
<feature type="sequence variant" id="VAR_050710" description="In dbSNP:rs11552197.">
    <original>G</original>
    <variation>S</variation>
    <location>
        <position position="100"/>
    </location>
</feature>
<feature type="mutagenesis site" description="Abolishes binding to GET3." evidence="6">
    <original>RRRK</original>
    <variation>EEEE</variation>
    <location>
        <begin position="32"/>
        <end position="35"/>
    </location>
</feature>
<feature type="helix" evidence="21">
    <location>
        <begin position="192"/>
        <end position="205"/>
    </location>
</feature>
<feature type="turn" evidence="21">
    <location>
        <begin position="206"/>
        <end position="208"/>
    </location>
</feature>
<feature type="helix" evidence="21">
    <location>
        <begin position="215"/>
        <end position="230"/>
    </location>
</feature>
<feature type="helix" evidence="21">
    <location>
        <begin position="243"/>
        <end position="248"/>
    </location>
</feature>
<feature type="turn" evidence="21">
    <location>
        <begin position="249"/>
        <end position="251"/>
    </location>
</feature>
<feature type="helix" evidence="21">
    <location>
        <begin position="254"/>
        <end position="290"/>
    </location>
</feature>
<organism>
    <name type="scientific">Homo sapiens</name>
    <name type="common">Human</name>
    <dbReference type="NCBI Taxonomy" id="9606"/>
    <lineage>
        <taxon>Eukaryota</taxon>
        <taxon>Metazoa</taxon>
        <taxon>Chordata</taxon>
        <taxon>Craniata</taxon>
        <taxon>Vertebrata</taxon>
        <taxon>Euteleostomi</taxon>
        <taxon>Mammalia</taxon>
        <taxon>Eutheria</taxon>
        <taxon>Euarchontoglires</taxon>
        <taxon>Primates</taxon>
        <taxon>Haplorrhini</taxon>
        <taxon>Catarrhini</taxon>
        <taxon>Hominidae</taxon>
        <taxon>Homo</taxon>
    </lineage>
</organism>
<sequence length="296" mass="32953">MESMAVATDGGERPGVPAGSGLSASQRRAELRRRKLLMNSEQRINRIMGFHRPGSGAEEESQTKSKQQDSDKLNSLSVPSVSKRVVLGDSVSTGTTDQQGGVAEVKGTQLGDKLDSFIKPPECSSDVNLELRQRNRGDLTADSVQRGSRHGLEQYLSRFEEAMKLRKQLISEKPSQEDGNTTEEFDSFRIFRLVGCALLALGVRAFVCKYLSIFAPFLTLQLAYMGLYKYFPKSEKKIKTTVLTAALLLSGIPAEVINRSMDTYSKMGEVFTDLCVYFFTFIFCHELLDYWGSEVP</sequence>
<dbReference type="EMBL" id="U18242">
    <property type="protein sequence ID" value="AAA59420.1"/>
    <property type="molecule type" value="mRNA"/>
</dbReference>
<dbReference type="EMBL" id="AK313156">
    <property type="protein sequence ID" value="BAG35974.1"/>
    <property type="molecule type" value="mRNA"/>
</dbReference>
<dbReference type="EMBL" id="CH471062">
    <property type="protein sequence ID" value="EAW62243.1"/>
    <property type="molecule type" value="Genomic_DNA"/>
</dbReference>
<dbReference type="EMBL" id="CH471062">
    <property type="protein sequence ID" value="EAW62244.1"/>
    <property type="molecule type" value="Genomic_DNA"/>
</dbReference>
<dbReference type="EMBL" id="BC130325">
    <property type="protein sequence ID" value="AAI30326.1"/>
    <property type="molecule type" value="mRNA"/>
</dbReference>
<dbReference type="EMBL" id="AF068179">
    <property type="protein sequence ID" value="AAC23596.1"/>
    <property type="molecule type" value="mRNA"/>
</dbReference>
<dbReference type="CCDS" id="CCDS4178.1"/>
<dbReference type="PIR" id="S47594">
    <property type="entry name" value="S47594"/>
</dbReference>
<dbReference type="RefSeq" id="NP_001736.1">
    <property type="nucleotide sequence ID" value="NM_001745.4"/>
</dbReference>
<dbReference type="PDB" id="6SO5">
    <property type="method" value="EM"/>
    <property type="resolution" value="4.20 A"/>
    <property type="chains" value="E/F=185-296"/>
</dbReference>
<dbReference type="PDB" id="8CR1">
    <property type="method" value="EM"/>
    <property type="resolution" value="3.20 A"/>
    <property type="chains" value="C/D=185-296"/>
</dbReference>
<dbReference type="PDBsum" id="6SO5"/>
<dbReference type="PDBsum" id="8CR1"/>
<dbReference type="EMDB" id="EMD-10266"/>
<dbReference type="SMR" id="P49069"/>
<dbReference type="BioGRID" id="107269">
    <property type="interactions" value="151"/>
</dbReference>
<dbReference type="ComplexPortal" id="CPX-6464">
    <property type="entry name" value="GET complex"/>
</dbReference>
<dbReference type="CORUM" id="P49069"/>
<dbReference type="FunCoup" id="P49069">
    <property type="interactions" value="2110"/>
</dbReference>
<dbReference type="IntAct" id="P49069">
    <property type="interactions" value="50"/>
</dbReference>
<dbReference type="MINT" id="P49069"/>
<dbReference type="STRING" id="9606.ENSP00000297156"/>
<dbReference type="DrugBank" id="DB12139">
    <property type="generic name" value="Alisporivir"/>
</dbReference>
<dbReference type="DrugBank" id="DB00091">
    <property type="generic name" value="Cyclosporine"/>
</dbReference>
<dbReference type="DrugBank" id="DB12451">
    <property type="generic name" value="SCY-635"/>
</dbReference>
<dbReference type="DrugBank" id="DB11693">
    <property type="generic name" value="Voclosporin"/>
</dbReference>
<dbReference type="TCDB" id="3.A.19.1.1">
    <property type="family name" value="the guided entry of tail anchored protein (get) family"/>
</dbReference>
<dbReference type="GlyGen" id="P49069">
    <property type="glycosylation" value="1 site, 1 O-linked glycan (1 site)"/>
</dbReference>
<dbReference type="iPTMnet" id="P49069"/>
<dbReference type="PhosphoSitePlus" id="P49069"/>
<dbReference type="SwissPalm" id="P49069"/>
<dbReference type="BioMuta" id="CAMLG"/>
<dbReference type="DMDM" id="1345662"/>
<dbReference type="jPOST" id="P49069"/>
<dbReference type="MassIVE" id="P49069"/>
<dbReference type="PaxDb" id="9606-ENSP00000297156"/>
<dbReference type="PeptideAtlas" id="P49069"/>
<dbReference type="ProteomicsDB" id="55961"/>
<dbReference type="Pumba" id="P49069"/>
<dbReference type="Antibodypedia" id="26345">
    <property type="antibodies" value="297 antibodies from 30 providers"/>
</dbReference>
<dbReference type="DNASU" id="819"/>
<dbReference type="Ensembl" id="ENST00000297156.4">
    <property type="protein sequence ID" value="ENSP00000297156.2"/>
    <property type="gene ID" value="ENSG00000164615.6"/>
</dbReference>
<dbReference type="GeneID" id="819"/>
<dbReference type="KEGG" id="hsa:819"/>
<dbReference type="MANE-Select" id="ENST00000297156.4">
    <property type="protein sequence ID" value="ENSP00000297156.2"/>
    <property type="RefSeq nucleotide sequence ID" value="NM_001745.4"/>
    <property type="RefSeq protein sequence ID" value="NP_001736.1"/>
</dbReference>
<dbReference type="UCSC" id="uc003kzt.4">
    <property type="organism name" value="human"/>
</dbReference>
<dbReference type="AGR" id="HGNC:1471"/>
<dbReference type="CTD" id="819"/>
<dbReference type="DisGeNET" id="819"/>
<dbReference type="GeneCards" id="CAMLG"/>
<dbReference type="HGNC" id="HGNC:1471">
    <property type="gene designation" value="CAMLG"/>
</dbReference>
<dbReference type="HPA" id="ENSG00000164615">
    <property type="expression patterns" value="Low tissue specificity"/>
</dbReference>
<dbReference type="MalaCards" id="CAMLG"/>
<dbReference type="MIM" id="601118">
    <property type="type" value="gene"/>
</dbReference>
<dbReference type="MIM" id="620201">
    <property type="type" value="phenotype"/>
</dbReference>
<dbReference type="neXtProt" id="NX_P49069"/>
<dbReference type="OpenTargets" id="ENSG00000164615"/>
<dbReference type="PharmGKB" id="PA26053"/>
<dbReference type="VEuPathDB" id="HostDB:ENSG00000164615"/>
<dbReference type="eggNOG" id="ENOG502QVCE">
    <property type="taxonomic scope" value="Eukaryota"/>
</dbReference>
<dbReference type="GeneTree" id="ENSGT00390000015996"/>
<dbReference type="HOGENOM" id="CLU_081881_0_0_1"/>
<dbReference type="InParanoid" id="P49069"/>
<dbReference type="OMA" id="SFMKPPE"/>
<dbReference type="OrthoDB" id="9895378at2759"/>
<dbReference type="PAN-GO" id="P49069">
    <property type="GO annotations" value="2 GO annotations based on evolutionary models"/>
</dbReference>
<dbReference type="PhylomeDB" id="P49069"/>
<dbReference type="TreeFam" id="TF331902"/>
<dbReference type="PathwayCommons" id="P49069"/>
<dbReference type="Reactome" id="R-HSA-9609523">
    <property type="pathway name" value="Insertion of tail-anchored proteins into the endoplasmic reticulum membrane"/>
</dbReference>
<dbReference type="SignaLink" id="P49069"/>
<dbReference type="BioGRID-ORCS" id="819">
    <property type="hits" value="256 hits in 1171 CRISPR screens"/>
</dbReference>
<dbReference type="ChiTaRS" id="CAMLG">
    <property type="organism name" value="human"/>
</dbReference>
<dbReference type="GeneWiki" id="CAMLG"/>
<dbReference type="GenomeRNAi" id="819"/>
<dbReference type="Pharos" id="P49069">
    <property type="development level" value="Tbio"/>
</dbReference>
<dbReference type="PRO" id="PR:P49069"/>
<dbReference type="Proteomes" id="UP000005640">
    <property type="component" value="Chromosome 5"/>
</dbReference>
<dbReference type="RNAct" id="P49069">
    <property type="molecule type" value="protein"/>
</dbReference>
<dbReference type="Bgee" id="ENSG00000164615">
    <property type="expression patterns" value="Expressed in secondary oocyte and 206 other cell types or tissues"/>
</dbReference>
<dbReference type="ExpressionAtlas" id="P49069">
    <property type="expression patterns" value="baseline and differential"/>
</dbReference>
<dbReference type="GO" id="GO:0005737">
    <property type="term" value="C:cytoplasm"/>
    <property type="evidence" value="ECO:0000314"/>
    <property type="project" value="UniProtKB"/>
</dbReference>
<dbReference type="GO" id="GO:0005783">
    <property type="term" value="C:endoplasmic reticulum"/>
    <property type="evidence" value="ECO:0000314"/>
    <property type="project" value="UniProtKB"/>
</dbReference>
<dbReference type="GO" id="GO:0005789">
    <property type="term" value="C:endoplasmic reticulum membrane"/>
    <property type="evidence" value="ECO:0000314"/>
    <property type="project" value="UniProtKB"/>
</dbReference>
<dbReference type="GO" id="GO:0043529">
    <property type="term" value="C:GET complex"/>
    <property type="evidence" value="ECO:0000314"/>
    <property type="project" value="UniProtKB"/>
</dbReference>
<dbReference type="GO" id="GO:0016020">
    <property type="term" value="C:membrane"/>
    <property type="evidence" value="ECO:0007005"/>
    <property type="project" value="UniProtKB"/>
</dbReference>
<dbReference type="GO" id="GO:0031625">
    <property type="term" value="F:ubiquitin protein ligase binding"/>
    <property type="evidence" value="ECO:0000353"/>
    <property type="project" value="UniProtKB"/>
</dbReference>
<dbReference type="GO" id="GO:0001782">
    <property type="term" value="P:B cell homeostasis"/>
    <property type="evidence" value="ECO:0000250"/>
    <property type="project" value="UniProtKB"/>
</dbReference>
<dbReference type="GO" id="GO:0006952">
    <property type="term" value="P:defense response"/>
    <property type="evidence" value="ECO:0000304"/>
    <property type="project" value="ProtInc"/>
</dbReference>
<dbReference type="GO" id="GO:0007173">
    <property type="term" value="P:epidermal growth factor receptor signaling pathway"/>
    <property type="evidence" value="ECO:0007669"/>
    <property type="project" value="Ensembl"/>
</dbReference>
<dbReference type="GO" id="GO:0032435">
    <property type="term" value="P:negative regulation of proteasomal ubiquitin-dependent protein catabolic process"/>
    <property type="evidence" value="ECO:0000315"/>
    <property type="project" value="UniProtKB"/>
</dbReference>
<dbReference type="GO" id="GO:0031397">
    <property type="term" value="P:negative regulation of protein ubiquitination"/>
    <property type="evidence" value="ECO:0000315"/>
    <property type="project" value="UniProtKB"/>
</dbReference>
<dbReference type="GO" id="GO:0045048">
    <property type="term" value="P:protein insertion into ER membrane"/>
    <property type="evidence" value="ECO:0000303"/>
    <property type="project" value="ComplexPortal"/>
</dbReference>
<dbReference type="GO" id="GO:0050821">
    <property type="term" value="P:protein stabilization"/>
    <property type="evidence" value="ECO:0000314"/>
    <property type="project" value="UniProtKB"/>
</dbReference>
<dbReference type="GO" id="GO:0001881">
    <property type="term" value="P:receptor recycling"/>
    <property type="evidence" value="ECO:0007669"/>
    <property type="project" value="Ensembl"/>
</dbReference>
<dbReference type="GO" id="GO:0007165">
    <property type="term" value="P:signal transduction"/>
    <property type="evidence" value="ECO:0000304"/>
    <property type="project" value="ProtInc"/>
</dbReference>
<dbReference type="GO" id="GO:0071816">
    <property type="term" value="P:tail-anchored membrane protein insertion into ER membrane"/>
    <property type="evidence" value="ECO:0000314"/>
    <property type="project" value="UniProtKB"/>
</dbReference>
<dbReference type="GO" id="GO:0016192">
    <property type="term" value="P:vesicle-mediated transport"/>
    <property type="evidence" value="ECO:0007669"/>
    <property type="project" value="UniProtKB-KW"/>
</dbReference>
<dbReference type="InterPro" id="IPR016719">
    <property type="entry name" value="CAMLG"/>
</dbReference>
<dbReference type="PANTHER" id="PTHR15026">
    <property type="entry name" value="CALCIUM-SIGNAL MODULATING CYCLOPHILIN LIGAND CAML"/>
    <property type="match status" value="1"/>
</dbReference>
<dbReference type="PANTHER" id="PTHR15026:SF0">
    <property type="entry name" value="GUIDED ENTRY OF TAIL-ANCHORED PROTEINS FACTOR CAMLG"/>
    <property type="match status" value="1"/>
</dbReference>
<dbReference type="Pfam" id="PF14963">
    <property type="entry name" value="Get2_like"/>
    <property type="match status" value="1"/>
</dbReference>
<dbReference type="PIRSF" id="PIRSF018259">
    <property type="entry name" value="CAML"/>
    <property type="match status" value="1"/>
</dbReference>
<gene>
    <name evidence="18" type="primary">CAMLG</name>
    <name evidence="15 18" type="synonym">CAML</name>
    <name evidence="18" type="synonym">GET2</name>
</gene>
<evidence type="ECO:0000250" key="1">
    <source>
        <dbReference type="UniProtKB" id="P49070"/>
    </source>
</evidence>
<evidence type="ECO:0000250" key="2">
    <source>
        <dbReference type="UniProtKB" id="Q6DGG9"/>
    </source>
</evidence>
<evidence type="ECO:0000255" key="3"/>
<evidence type="ECO:0000256" key="4">
    <source>
        <dbReference type="SAM" id="MobiDB-lite"/>
    </source>
</evidence>
<evidence type="ECO:0000269" key="5">
    <source>
    </source>
</evidence>
<evidence type="ECO:0000269" key="6">
    <source>
    </source>
</evidence>
<evidence type="ECO:0000269" key="7">
    <source>
    </source>
</evidence>
<evidence type="ECO:0000269" key="8">
    <source>
    </source>
</evidence>
<evidence type="ECO:0000269" key="9">
    <source>
    </source>
</evidence>
<evidence type="ECO:0000269" key="10">
    <source>
    </source>
</evidence>
<evidence type="ECO:0000269" key="11">
    <source>
    </source>
</evidence>
<evidence type="ECO:0000269" key="12">
    <source>
    </source>
</evidence>
<evidence type="ECO:0000269" key="13">
    <source>
    </source>
</evidence>
<evidence type="ECO:0000269" key="14">
    <source>
    </source>
</evidence>
<evidence type="ECO:0000303" key="15">
    <source>
    </source>
</evidence>
<evidence type="ECO:0000305" key="16"/>
<evidence type="ECO:0000305" key="17">
    <source>
    </source>
</evidence>
<evidence type="ECO:0000312" key="18">
    <source>
        <dbReference type="HGNC" id="HGNC:1471"/>
    </source>
</evidence>
<evidence type="ECO:0007744" key="19">
    <source>
        <dbReference type="PDB" id="6SO5"/>
    </source>
</evidence>
<evidence type="ECO:0007744" key="20">
    <source>
    </source>
</evidence>
<evidence type="ECO:0007829" key="21">
    <source>
        <dbReference type="PDB" id="8CR1"/>
    </source>
</evidence>